<organism>
    <name type="scientific">Streptococcus pneumoniae (strain ATCC BAA-255 / R6)</name>
    <dbReference type="NCBI Taxonomy" id="171101"/>
    <lineage>
        <taxon>Bacteria</taxon>
        <taxon>Bacillati</taxon>
        <taxon>Bacillota</taxon>
        <taxon>Bacilli</taxon>
        <taxon>Lactobacillales</taxon>
        <taxon>Streptococcaceae</taxon>
        <taxon>Streptococcus</taxon>
    </lineage>
</organism>
<proteinExistence type="inferred from homology"/>
<keyword id="KW-1003">Cell membrane</keyword>
<keyword id="KW-0378">Hydrolase</keyword>
<keyword id="KW-0472">Membrane</keyword>
<keyword id="KW-0645">Protease</keyword>
<keyword id="KW-1185">Reference proteome</keyword>
<keyword id="KW-0812">Transmembrane</keyword>
<keyword id="KW-1133">Transmembrane helix</keyword>
<gene>
    <name type="primary">lepB</name>
    <name type="synonym">spi</name>
    <name type="ordered locus">spr0364</name>
</gene>
<evidence type="ECO:0000250" key="1"/>
<evidence type="ECO:0000255" key="2"/>
<evidence type="ECO:0000305" key="3"/>
<dbReference type="EC" id="3.4.21.89"/>
<dbReference type="EMBL" id="AE007317">
    <property type="protein sequence ID" value="AAK99168.1"/>
    <property type="molecule type" value="Genomic_DNA"/>
</dbReference>
<dbReference type="RefSeq" id="NP_357958.1">
    <property type="nucleotide sequence ID" value="NC_003098.1"/>
</dbReference>
<dbReference type="RefSeq" id="WP_001048155.1">
    <property type="nucleotide sequence ID" value="NC_003098.1"/>
</dbReference>
<dbReference type="SMR" id="P59662"/>
<dbReference type="STRING" id="171101.spr0364"/>
<dbReference type="MEROPS" id="S26.015"/>
<dbReference type="KEGG" id="spr:spr0364"/>
<dbReference type="PATRIC" id="fig|171101.6.peg.405"/>
<dbReference type="eggNOG" id="COG0681">
    <property type="taxonomic scope" value="Bacteria"/>
</dbReference>
<dbReference type="HOGENOM" id="CLU_028723_5_0_9"/>
<dbReference type="Proteomes" id="UP000000586">
    <property type="component" value="Chromosome"/>
</dbReference>
<dbReference type="GO" id="GO:0005886">
    <property type="term" value="C:plasma membrane"/>
    <property type="evidence" value="ECO:0007669"/>
    <property type="project" value="UniProtKB-SubCell"/>
</dbReference>
<dbReference type="GO" id="GO:0004252">
    <property type="term" value="F:serine-type endopeptidase activity"/>
    <property type="evidence" value="ECO:0000318"/>
    <property type="project" value="GO_Central"/>
</dbReference>
<dbReference type="GO" id="GO:0006465">
    <property type="term" value="P:signal peptide processing"/>
    <property type="evidence" value="ECO:0000318"/>
    <property type="project" value="GO_Central"/>
</dbReference>
<dbReference type="CDD" id="cd06462">
    <property type="entry name" value="Peptidase_S24_S26"/>
    <property type="match status" value="1"/>
</dbReference>
<dbReference type="FunFam" id="2.10.109.10:FF:000027">
    <property type="entry name" value="Signal peptidase I"/>
    <property type="match status" value="1"/>
</dbReference>
<dbReference type="Gene3D" id="2.10.109.10">
    <property type="entry name" value="Umud Fragment, subunit A"/>
    <property type="match status" value="1"/>
</dbReference>
<dbReference type="InterPro" id="IPR036286">
    <property type="entry name" value="LexA/Signal_pep-like_sf"/>
</dbReference>
<dbReference type="InterPro" id="IPR000223">
    <property type="entry name" value="Pept_S26A_signal_pept_1"/>
</dbReference>
<dbReference type="InterPro" id="IPR019757">
    <property type="entry name" value="Pept_S26A_signal_pept_1_Lys-AS"/>
</dbReference>
<dbReference type="InterPro" id="IPR019756">
    <property type="entry name" value="Pept_S26A_signal_pept_1_Ser-AS"/>
</dbReference>
<dbReference type="InterPro" id="IPR019533">
    <property type="entry name" value="Peptidase_S26"/>
</dbReference>
<dbReference type="NCBIfam" id="TIGR02227">
    <property type="entry name" value="sigpep_I_bact"/>
    <property type="match status" value="1"/>
</dbReference>
<dbReference type="PANTHER" id="PTHR43390:SF1">
    <property type="entry name" value="CHLOROPLAST PROCESSING PEPTIDASE"/>
    <property type="match status" value="1"/>
</dbReference>
<dbReference type="PANTHER" id="PTHR43390">
    <property type="entry name" value="SIGNAL PEPTIDASE I"/>
    <property type="match status" value="1"/>
</dbReference>
<dbReference type="Pfam" id="PF10502">
    <property type="entry name" value="Peptidase_S26"/>
    <property type="match status" value="1"/>
</dbReference>
<dbReference type="PRINTS" id="PR00727">
    <property type="entry name" value="LEADERPTASE"/>
</dbReference>
<dbReference type="SUPFAM" id="SSF51306">
    <property type="entry name" value="LexA/Signal peptidase"/>
    <property type="match status" value="1"/>
</dbReference>
<dbReference type="PROSITE" id="PS00501">
    <property type="entry name" value="SPASE_I_1"/>
    <property type="match status" value="1"/>
</dbReference>
<dbReference type="PROSITE" id="PS00760">
    <property type="entry name" value="SPASE_I_2"/>
    <property type="match status" value="1"/>
</dbReference>
<reference key="1">
    <citation type="journal article" date="2001" name="J. Bacteriol.">
        <title>Genome of the bacterium Streptococcus pneumoniae strain R6.</title>
        <authorList>
            <person name="Hoskins J."/>
            <person name="Alborn W.E. Jr."/>
            <person name="Arnold J."/>
            <person name="Blaszczak L.C."/>
            <person name="Burgett S."/>
            <person name="DeHoff B.S."/>
            <person name="Estrem S.T."/>
            <person name="Fritz L."/>
            <person name="Fu D.-J."/>
            <person name="Fuller W."/>
            <person name="Geringer C."/>
            <person name="Gilmour R."/>
            <person name="Glass J.S."/>
            <person name="Khoja H."/>
            <person name="Kraft A.R."/>
            <person name="Lagace R.E."/>
            <person name="LeBlanc D.J."/>
            <person name="Lee L.N."/>
            <person name="Lefkowitz E.J."/>
            <person name="Lu J."/>
            <person name="Matsushima P."/>
            <person name="McAhren S.M."/>
            <person name="McHenney M."/>
            <person name="McLeaster K."/>
            <person name="Mundy C.W."/>
            <person name="Nicas T.I."/>
            <person name="Norris F.H."/>
            <person name="O'Gara M."/>
            <person name="Peery R.B."/>
            <person name="Robertson G.T."/>
            <person name="Rockey P."/>
            <person name="Sun P.-M."/>
            <person name="Winkler M.E."/>
            <person name="Yang Y."/>
            <person name="Young-Bellido M."/>
            <person name="Zhao G."/>
            <person name="Zook C.A."/>
            <person name="Baltz R.H."/>
            <person name="Jaskunas S.R."/>
            <person name="Rosteck P.R. Jr."/>
            <person name="Skatrud P.L."/>
            <person name="Glass J.I."/>
        </authorList>
    </citation>
    <scope>NUCLEOTIDE SEQUENCE [LARGE SCALE GENOMIC DNA]</scope>
    <source>
        <strain>ATCC BAA-255 / R6</strain>
    </source>
</reference>
<protein>
    <recommendedName>
        <fullName>Signal peptidase I</fullName>
        <shortName>SPase I</shortName>
        <ecNumber>3.4.21.89</ecNumber>
    </recommendedName>
    <alternativeName>
        <fullName>Leader peptidase I</fullName>
    </alternativeName>
</protein>
<name>LEP_STRR6</name>
<feature type="chain" id="PRO_0000109534" description="Signal peptidase I">
    <location>
        <begin position="1"/>
        <end position="204"/>
    </location>
</feature>
<feature type="topological domain" description="Cytoplasmic" evidence="2">
    <location>
        <begin position="1"/>
        <end position="10"/>
    </location>
</feature>
<feature type="transmembrane region" description="Helical" evidence="2">
    <location>
        <begin position="11"/>
        <end position="30"/>
    </location>
</feature>
<feature type="topological domain" description="Extracellular" evidence="2">
    <location>
        <begin position="31"/>
        <end position="204"/>
    </location>
</feature>
<feature type="active site" evidence="1">
    <location>
        <position position="38"/>
    </location>
</feature>
<feature type="active site" evidence="1">
    <location>
        <position position="76"/>
    </location>
</feature>
<comment type="catalytic activity">
    <reaction>
        <text>Cleavage of hydrophobic, N-terminal signal or leader sequences from secreted and periplasmic proteins.</text>
        <dbReference type="EC" id="3.4.21.89"/>
    </reaction>
</comment>
<comment type="subcellular location">
    <subcellularLocation>
        <location evidence="3">Cell membrane</location>
        <topology evidence="3">Single-pass type II membrane protein</topology>
    </subcellularLocation>
</comment>
<comment type="similarity">
    <text evidence="3">Belongs to the peptidase S26 family.</text>
</comment>
<sequence>MNLFKNFLKEWGLFLLILSLLALSRIFFWSNVRVEGHSMDPTLADGEILFVVKHLPIDRFDIVVAHEEDGNKDIVKRVIGMPGDTIRYENDKLYINDKETDEPYLADYIKRFKDDKLQSTYSGKGFEGNKGTFFRSIAQKAQAFTVDVNYNTNFSFTVPEGEYLLLGDDRLVSSDSRHVGTFKAKDITGEAKFRFWPITRIGTF</sequence>
<accession>P59662</accession>